<evidence type="ECO:0000255" key="1">
    <source>
        <dbReference type="HAMAP-Rule" id="MF_00294"/>
    </source>
</evidence>
<evidence type="ECO:0000305" key="2"/>
<organism>
    <name type="scientific">Staphylococcus aureus (strain Mu50 / ATCC 700699)</name>
    <dbReference type="NCBI Taxonomy" id="158878"/>
    <lineage>
        <taxon>Bacteria</taxon>
        <taxon>Bacillati</taxon>
        <taxon>Bacillota</taxon>
        <taxon>Bacilli</taxon>
        <taxon>Bacillales</taxon>
        <taxon>Staphylococcaceae</taxon>
        <taxon>Staphylococcus</taxon>
    </lineage>
</organism>
<proteinExistence type="inferred from homology"/>
<reference key="1">
    <citation type="journal article" date="2001" name="Lancet">
        <title>Whole genome sequencing of meticillin-resistant Staphylococcus aureus.</title>
        <authorList>
            <person name="Kuroda M."/>
            <person name="Ohta T."/>
            <person name="Uchiyama I."/>
            <person name="Baba T."/>
            <person name="Yuzawa H."/>
            <person name="Kobayashi I."/>
            <person name="Cui L."/>
            <person name="Oguchi A."/>
            <person name="Aoki K."/>
            <person name="Nagai Y."/>
            <person name="Lian J.-Q."/>
            <person name="Ito T."/>
            <person name="Kanamori M."/>
            <person name="Matsumaru H."/>
            <person name="Maruyama A."/>
            <person name="Murakami H."/>
            <person name="Hosoyama A."/>
            <person name="Mizutani-Ui Y."/>
            <person name="Takahashi N.K."/>
            <person name="Sawano T."/>
            <person name="Inoue R."/>
            <person name="Kaito C."/>
            <person name="Sekimizu K."/>
            <person name="Hirakawa H."/>
            <person name="Kuhara S."/>
            <person name="Goto S."/>
            <person name="Yabuzaki J."/>
            <person name="Kanehisa M."/>
            <person name="Yamashita A."/>
            <person name="Oshima K."/>
            <person name="Furuya K."/>
            <person name="Yoshino C."/>
            <person name="Shiba T."/>
            <person name="Hattori M."/>
            <person name="Ogasawara N."/>
            <person name="Hayashi H."/>
            <person name="Hiramatsu K."/>
        </authorList>
    </citation>
    <scope>NUCLEOTIDE SEQUENCE [LARGE SCALE GENOMIC DNA]</scope>
    <source>
        <strain>Mu50 / ATCC 700699</strain>
    </source>
</reference>
<sequence length="47" mass="5375">MRKIPLNCEACGNRNYNVPKQEGSATRLTLKKYCPKCNAHTIHKESK</sequence>
<feature type="chain" id="PRO_0000170215" description="Large ribosomal subunit protein bL33C">
    <location>
        <begin position="1"/>
        <end position="47"/>
    </location>
</feature>
<name>RL333_STAAM</name>
<comment type="similarity">
    <text evidence="2">Belongs to the bacterial ribosomal protein bL33 family.</text>
</comment>
<accession>P0C0A6</accession>
<keyword id="KW-0687">Ribonucleoprotein</keyword>
<keyword id="KW-0689">Ribosomal protein</keyword>
<gene>
    <name type="primary">rpmG3</name>
    <name type="ordered locus">SAV0533.1</name>
</gene>
<protein>
    <recommendedName>
        <fullName evidence="1">Large ribosomal subunit protein bL33C</fullName>
    </recommendedName>
    <alternativeName>
        <fullName>50S ribosomal protein L33 3</fullName>
    </alternativeName>
</protein>
<dbReference type="EMBL" id="BA000017">
    <property type="status" value="NOT_ANNOTATED_CDS"/>
    <property type="molecule type" value="Genomic_DNA"/>
</dbReference>
<dbReference type="SMR" id="P0C0A6"/>
<dbReference type="Proteomes" id="UP000002481">
    <property type="component" value="Chromosome"/>
</dbReference>
<dbReference type="GO" id="GO:0005737">
    <property type="term" value="C:cytoplasm"/>
    <property type="evidence" value="ECO:0007669"/>
    <property type="project" value="UniProtKB-ARBA"/>
</dbReference>
<dbReference type="GO" id="GO:1990904">
    <property type="term" value="C:ribonucleoprotein complex"/>
    <property type="evidence" value="ECO:0007669"/>
    <property type="project" value="UniProtKB-KW"/>
</dbReference>
<dbReference type="GO" id="GO:0005840">
    <property type="term" value="C:ribosome"/>
    <property type="evidence" value="ECO:0007669"/>
    <property type="project" value="UniProtKB-KW"/>
</dbReference>
<dbReference type="GO" id="GO:0003735">
    <property type="term" value="F:structural constituent of ribosome"/>
    <property type="evidence" value="ECO:0007669"/>
    <property type="project" value="InterPro"/>
</dbReference>
<dbReference type="GO" id="GO:0006412">
    <property type="term" value="P:translation"/>
    <property type="evidence" value="ECO:0007669"/>
    <property type="project" value="UniProtKB-UniRule"/>
</dbReference>
<dbReference type="Gene3D" id="2.20.28.120">
    <property type="entry name" value="Ribosomal protein L33"/>
    <property type="match status" value="1"/>
</dbReference>
<dbReference type="HAMAP" id="MF_00294">
    <property type="entry name" value="Ribosomal_bL33"/>
    <property type="match status" value="1"/>
</dbReference>
<dbReference type="InterPro" id="IPR001705">
    <property type="entry name" value="Ribosomal_bL33"/>
</dbReference>
<dbReference type="InterPro" id="IPR018264">
    <property type="entry name" value="Ribosomal_bL33_CS"/>
</dbReference>
<dbReference type="InterPro" id="IPR038584">
    <property type="entry name" value="Ribosomal_bL33_sf"/>
</dbReference>
<dbReference type="InterPro" id="IPR011332">
    <property type="entry name" value="Ribosomal_zn-bd"/>
</dbReference>
<dbReference type="NCBIfam" id="NF001764">
    <property type="entry name" value="PRK00504.1"/>
    <property type="match status" value="1"/>
</dbReference>
<dbReference type="NCBIfam" id="TIGR01023">
    <property type="entry name" value="rpmG_bact"/>
    <property type="match status" value="1"/>
</dbReference>
<dbReference type="Pfam" id="PF00471">
    <property type="entry name" value="Ribosomal_L33"/>
    <property type="match status" value="1"/>
</dbReference>
<dbReference type="SUPFAM" id="SSF57829">
    <property type="entry name" value="Zn-binding ribosomal proteins"/>
    <property type="match status" value="1"/>
</dbReference>
<dbReference type="PROSITE" id="PS00582">
    <property type="entry name" value="RIBOSOMAL_L33"/>
    <property type="match status" value="1"/>
</dbReference>